<protein>
    <recommendedName>
        <fullName>Formate hydrogenlyase subunit 3</fullName>
        <shortName>FHL subunit 3</shortName>
    </recommendedName>
    <alternativeName>
        <fullName>Hydrogenase-3 component C</fullName>
    </alternativeName>
</protein>
<feature type="chain" id="PRO_0000118048" description="Formate hydrogenlyase subunit 3">
    <location>
        <begin position="1"/>
        <end position="608"/>
    </location>
</feature>
<feature type="transmembrane region" description="Helical" evidence="1">
    <location>
        <begin position="10"/>
        <end position="26"/>
    </location>
</feature>
<feature type="transmembrane region" description="Helical" evidence="1">
    <location>
        <begin position="44"/>
        <end position="67"/>
    </location>
</feature>
<feature type="transmembrane region" description="Helical" evidence="1">
    <location>
        <begin position="76"/>
        <end position="93"/>
    </location>
</feature>
<feature type="transmembrane region" description="Helical" evidence="1">
    <location>
        <begin position="116"/>
        <end position="140"/>
    </location>
</feature>
<feature type="transmembrane region" description="Helical" evidence="1">
    <location>
        <begin position="153"/>
        <end position="173"/>
    </location>
</feature>
<feature type="transmembrane region" description="Helical" evidence="1">
    <location>
        <begin position="197"/>
        <end position="218"/>
    </location>
</feature>
<feature type="transmembrane region" description="Helical" evidence="1">
    <location>
        <begin position="229"/>
        <end position="251"/>
    </location>
</feature>
<feature type="transmembrane region" description="Helical" evidence="1">
    <location>
        <begin position="258"/>
        <end position="280"/>
    </location>
</feature>
<feature type="transmembrane region" description="Helical" evidence="1">
    <location>
        <begin position="296"/>
        <end position="312"/>
    </location>
</feature>
<feature type="transmembrane region" description="Helical" evidence="1">
    <location>
        <begin position="416"/>
        <end position="440"/>
    </location>
</feature>
<feature type="transmembrane region" description="Helical" evidence="1">
    <location>
        <begin position="453"/>
        <end position="476"/>
    </location>
</feature>
<feature type="transmembrane region" description="Helical" evidence="1">
    <location>
        <begin position="502"/>
        <end position="521"/>
    </location>
</feature>
<feature type="sequence conflict" description="In Ref. 1; CAA35548." evidence="3" ref="1">
    <original>A</original>
    <variation>T</variation>
    <location>
        <position position="227"/>
    </location>
</feature>
<feature type="helix" evidence="4">
    <location>
        <begin position="3"/>
        <end position="23"/>
    </location>
</feature>
<feature type="turn" evidence="4">
    <location>
        <begin position="24"/>
        <end position="26"/>
    </location>
</feature>
<feature type="helix" evidence="4">
    <location>
        <begin position="28"/>
        <end position="56"/>
    </location>
</feature>
<feature type="strand" evidence="4">
    <location>
        <begin position="60"/>
        <end position="64"/>
    </location>
</feature>
<feature type="turn" evidence="4">
    <location>
        <begin position="65"/>
        <end position="68"/>
    </location>
</feature>
<feature type="strand" evidence="4">
    <location>
        <begin position="69"/>
        <end position="73"/>
    </location>
</feature>
<feature type="helix" evidence="4">
    <location>
        <begin position="75"/>
        <end position="98"/>
    </location>
</feature>
<feature type="helix" evidence="4">
    <location>
        <begin position="108"/>
        <end position="122"/>
    </location>
</feature>
<feature type="strand" evidence="4">
    <location>
        <begin position="124"/>
        <end position="126"/>
    </location>
</feature>
<feature type="helix" evidence="4">
    <location>
        <begin position="127"/>
        <end position="142"/>
    </location>
</feature>
<feature type="strand" evidence="4">
    <location>
        <begin position="145"/>
        <end position="147"/>
    </location>
</feature>
<feature type="turn" evidence="4">
    <location>
        <begin position="148"/>
        <end position="150"/>
    </location>
</feature>
<feature type="helix" evidence="4">
    <location>
        <begin position="152"/>
        <end position="176"/>
    </location>
</feature>
<feature type="helix" evidence="4">
    <location>
        <begin position="181"/>
        <end position="187"/>
    </location>
</feature>
<feature type="turn" evidence="4">
    <location>
        <begin position="188"/>
        <end position="190"/>
    </location>
</feature>
<feature type="helix" evidence="4">
    <location>
        <begin position="195"/>
        <end position="209"/>
    </location>
</feature>
<feature type="helix" evidence="4">
    <location>
        <begin position="217"/>
        <end position="223"/>
    </location>
</feature>
<feature type="helix" evidence="4">
    <location>
        <begin position="227"/>
        <end position="235"/>
    </location>
</feature>
<feature type="helix" evidence="4">
    <location>
        <begin position="237"/>
        <end position="249"/>
    </location>
</feature>
<feature type="strand" evidence="4">
    <location>
        <begin position="251"/>
        <end position="253"/>
    </location>
</feature>
<feature type="helix" evidence="4">
    <location>
        <begin position="257"/>
        <end position="278"/>
    </location>
</feature>
<feature type="helix" evidence="4">
    <location>
        <begin position="284"/>
        <end position="311"/>
    </location>
</feature>
<feature type="helix" evidence="4">
    <location>
        <begin position="315"/>
        <end position="350"/>
    </location>
</feature>
<feature type="helix" evidence="4">
    <location>
        <begin position="355"/>
        <end position="357"/>
    </location>
</feature>
<feature type="helix" evidence="4">
    <location>
        <begin position="361"/>
        <end position="364"/>
    </location>
</feature>
<feature type="helix" evidence="4">
    <location>
        <begin position="366"/>
        <end position="379"/>
    </location>
</feature>
<feature type="helix" evidence="4">
    <location>
        <begin position="386"/>
        <end position="402"/>
    </location>
</feature>
<feature type="strand" evidence="4">
    <location>
        <begin position="404"/>
        <end position="406"/>
    </location>
</feature>
<feature type="helix" evidence="4">
    <location>
        <begin position="407"/>
        <end position="439"/>
    </location>
</feature>
<feature type="helix" evidence="4">
    <location>
        <begin position="446"/>
        <end position="449"/>
    </location>
</feature>
<feature type="helix" evidence="4">
    <location>
        <begin position="456"/>
        <end position="474"/>
    </location>
</feature>
<feature type="helix" evidence="4">
    <location>
        <begin position="476"/>
        <end position="479"/>
    </location>
</feature>
<feature type="helix" evidence="4">
    <location>
        <begin position="481"/>
        <end position="484"/>
    </location>
</feature>
<feature type="helix" evidence="4">
    <location>
        <begin position="500"/>
        <end position="506"/>
    </location>
</feature>
<feature type="helix" evidence="4">
    <location>
        <begin position="512"/>
        <end position="520"/>
    </location>
</feature>
<feature type="helix" evidence="4">
    <location>
        <begin position="543"/>
        <end position="545"/>
    </location>
</feature>
<feature type="helix" evidence="4">
    <location>
        <begin position="549"/>
        <end position="552"/>
    </location>
</feature>
<feature type="helix" evidence="4">
    <location>
        <begin position="555"/>
        <end position="559"/>
    </location>
</feature>
<feature type="helix" evidence="4">
    <location>
        <begin position="561"/>
        <end position="569"/>
    </location>
</feature>
<feature type="strand" evidence="4">
    <location>
        <begin position="573"/>
        <end position="576"/>
    </location>
</feature>
<feature type="turn" evidence="4">
    <location>
        <begin position="577"/>
        <end position="580"/>
    </location>
</feature>
<feature type="helix" evidence="4">
    <location>
        <begin position="584"/>
        <end position="604"/>
    </location>
</feature>
<name>HYCC_ECOLI</name>
<comment type="subunit">
    <text>FHL comprises of a formate dehydrogenase, unidentified electron carriers and a hydrogenase (isoenzyme 3). In this non-energy conserving pathway molecular hydrogen and carbodioxide from formate are released.</text>
</comment>
<comment type="subcellular location">
    <subcellularLocation>
        <location evidence="2">Cell inner membrane</location>
        <topology evidence="2">Multi-pass membrane protein</topology>
    </subcellularLocation>
</comment>
<comment type="similarity">
    <text evidence="3">Belongs to the complex I subunit 4 family.</text>
</comment>
<evidence type="ECO:0000255" key="1"/>
<evidence type="ECO:0000269" key="2">
    <source>
    </source>
</evidence>
<evidence type="ECO:0000305" key="3"/>
<evidence type="ECO:0007829" key="4">
    <source>
        <dbReference type="PDB" id="7Z0S"/>
    </source>
</evidence>
<accession>P16429</accession>
<accession>Q2MAA6</accession>
<accession>Q46882</accession>
<reference key="1">
    <citation type="journal article" date="1990" name="Mol. Microbiol.">
        <title>Nucleotide sequence and expression of an operon in Escherichia coli coding for formate hydrogenlyase components.</title>
        <authorList>
            <person name="Boehm R."/>
            <person name="Sauter M."/>
            <person name="Boeck A."/>
        </authorList>
    </citation>
    <scope>NUCLEOTIDE SEQUENCE [GENOMIC DNA]</scope>
    <source>
        <strain>K12 / MC4100 / ATCC 35695 / DSM 6574</strain>
    </source>
</reference>
<reference key="2">
    <citation type="journal article" date="1997" name="Science">
        <title>The complete genome sequence of Escherichia coli K-12.</title>
        <authorList>
            <person name="Blattner F.R."/>
            <person name="Plunkett G. III"/>
            <person name="Bloch C.A."/>
            <person name="Perna N.T."/>
            <person name="Burland V."/>
            <person name="Riley M."/>
            <person name="Collado-Vides J."/>
            <person name="Glasner J.D."/>
            <person name="Rode C.K."/>
            <person name="Mayhew G.F."/>
            <person name="Gregor J."/>
            <person name="Davis N.W."/>
            <person name="Kirkpatrick H.A."/>
            <person name="Goeden M.A."/>
            <person name="Rose D.J."/>
            <person name="Mau B."/>
            <person name="Shao Y."/>
        </authorList>
    </citation>
    <scope>NUCLEOTIDE SEQUENCE [LARGE SCALE GENOMIC DNA]</scope>
    <source>
        <strain>K12 / MG1655 / ATCC 47076</strain>
    </source>
</reference>
<reference key="3">
    <citation type="journal article" date="2006" name="Mol. Syst. Biol.">
        <title>Highly accurate genome sequences of Escherichia coli K-12 strains MG1655 and W3110.</title>
        <authorList>
            <person name="Hayashi K."/>
            <person name="Morooka N."/>
            <person name="Yamamoto Y."/>
            <person name="Fujita K."/>
            <person name="Isono K."/>
            <person name="Choi S."/>
            <person name="Ohtsubo E."/>
            <person name="Baba T."/>
            <person name="Wanner B.L."/>
            <person name="Mori H."/>
            <person name="Horiuchi T."/>
        </authorList>
    </citation>
    <scope>NUCLEOTIDE SEQUENCE [LARGE SCALE GENOMIC DNA]</scope>
    <source>
        <strain>K12 / W3110 / ATCC 27325 / DSM 5911</strain>
    </source>
</reference>
<reference key="4">
    <citation type="journal article" date="2005" name="Science">
        <title>Global topology analysis of the Escherichia coli inner membrane proteome.</title>
        <authorList>
            <person name="Daley D.O."/>
            <person name="Rapp M."/>
            <person name="Granseth E."/>
            <person name="Melen K."/>
            <person name="Drew D."/>
            <person name="von Heijne G."/>
        </authorList>
    </citation>
    <scope>SUBCELLULAR LOCATION</scope>
    <source>
        <strain>K12 / MG1655 / ATCC 47076</strain>
    </source>
</reference>
<sequence length="608" mass="64077">MSAISLINSGVAWFVAAAVLAFLFSFQKALSGWIAGIGGAVGSLYTAAAGFTVLTGAVGVSGALSLVSYDVQISPLNAIWLITLGLCGLFVSLYNIDWHRHAQVKCNGLQINMLMAAAVCAVIASNLGMFVVMAEIMALCAVFLTSNSKEGKLWFALGRLGTLLLAIACWLLWQRYGTLDLRLLDMRMQQLPLGSDIWLLGVIGFGLLAGIIPLHGWVPQAHANASAPAAALFSTVVMKIGLLGILTLSLLGGNAPLWWGIALLVLGMITAFVGGLYALVEHNIQRLLAYHTLENIGIILLGLGAGVTGIALEQPALIALGLVGGLYHLLNHSLFKSVLFLGAGSVWFRTGHRDIEKLGGIGKKMPVISIAMLVGLMAMAALPPLNGFAGEWVIYQSFFKLSNSGAFVARLLGPLLAVGLAITGALAVMCMAKVYGVTFLGAPRTKEAENATCAPLLMSVSVVALAICCVIGGVAAPWLLPMLSAAVPLPLEPANTTVSQPMITLLLIACPLLPFIIMAICKGDRLPSRSRGAAWVCGYDHEKSMVITAHGFAMPVKQAFAPVLKLRKWLNPVSLVPGWQCEGSALLFRRMALVELAVLVVIIVSRGA</sequence>
<keyword id="KW-0002">3D-structure</keyword>
<keyword id="KW-0997">Cell inner membrane</keyword>
<keyword id="KW-1003">Cell membrane</keyword>
<keyword id="KW-0472">Membrane</keyword>
<keyword id="KW-0560">Oxidoreductase</keyword>
<keyword id="KW-1185">Reference proteome</keyword>
<keyword id="KW-0812">Transmembrane</keyword>
<keyword id="KW-1133">Transmembrane helix</keyword>
<dbReference type="EMBL" id="X17506">
    <property type="protein sequence ID" value="CAA35548.1"/>
    <property type="molecule type" value="Genomic_DNA"/>
</dbReference>
<dbReference type="EMBL" id="U29579">
    <property type="protein sequence ID" value="AAA69233.1"/>
    <property type="molecule type" value="Genomic_DNA"/>
</dbReference>
<dbReference type="EMBL" id="U00096">
    <property type="protein sequence ID" value="AAC75765.1"/>
    <property type="molecule type" value="Genomic_DNA"/>
</dbReference>
<dbReference type="EMBL" id="AP009048">
    <property type="protein sequence ID" value="BAE76800.1"/>
    <property type="molecule type" value="Genomic_DNA"/>
</dbReference>
<dbReference type="PIR" id="G65052">
    <property type="entry name" value="G65052"/>
</dbReference>
<dbReference type="RefSeq" id="NP_417203.1">
    <property type="nucleotide sequence ID" value="NC_000913.3"/>
</dbReference>
<dbReference type="RefSeq" id="WP_001274396.1">
    <property type="nucleotide sequence ID" value="NZ_LN832404.1"/>
</dbReference>
<dbReference type="PDB" id="7Z0S">
    <property type="method" value="EM"/>
    <property type="resolution" value="2.60 A"/>
    <property type="chains" value="C=1-608"/>
</dbReference>
<dbReference type="PDB" id="7Z0T">
    <property type="method" value="EM"/>
    <property type="resolution" value="3.40 A"/>
    <property type="chains" value="C=1-608"/>
</dbReference>
<dbReference type="PDBsum" id="7Z0S"/>
<dbReference type="PDBsum" id="7Z0T"/>
<dbReference type="EMDB" id="EMD-14429"/>
<dbReference type="EMDB" id="EMD-14430"/>
<dbReference type="SMR" id="P16429"/>
<dbReference type="BioGRID" id="4262104">
    <property type="interactions" value="8"/>
</dbReference>
<dbReference type="ComplexPortal" id="CPX-317">
    <property type="entry name" value="Formate hydrogenlyase-H/Hydrogenase-3 complex"/>
</dbReference>
<dbReference type="DIP" id="DIP-9973N"/>
<dbReference type="FunCoup" id="P16429">
    <property type="interactions" value="172"/>
</dbReference>
<dbReference type="IntAct" id="P16429">
    <property type="interactions" value="2"/>
</dbReference>
<dbReference type="STRING" id="511145.b2723"/>
<dbReference type="TCDB" id="3.D.1.9.2">
    <property type="family name" value="the h+ or na+-translocating nadh dehydrogenase (ndh) family"/>
</dbReference>
<dbReference type="PaxDb" id="511145-b2723"/>
<dbReference type="EnsemblBacteria" id="AAC75765">
    <property type="protein sequence ID" value="AAC75765"/>
    <property type="gene ID" value="b2723"/>
</dbReference>
<dbReference type="GeneID" id="945327"/>
<dbReference type="KEGG" id="ecj:JW2693"/>
<dbReference type="KEGG" id="eco:b2723"/>
<dbReference type="KEGG" id="ecoc:C3026_14980"/>
<dbReference type="PATRIC" id="fig|1411691.4.peg.4018"/>
<dbReference type="EchoBASE" id="EB0471"/>
<dbReference type="eggNOG" id="COG0651">
    <property type="taxonomic scope" value="Bacteria"/>
</dbReference>
<dbReference type="HOGENOM" id="CLU_007100_8_2_6"/>
<dbReference type="InParanoid" id="P16429"/>
<dbReference type="OMA" id="PPLWWGV"/>
<dbReference type="OrthoDB" id="9768329at2"/>
<dbReference type="PhylomeDB" id="P16429"/>
<dbReference type="BioCyc" id="EcoCyc:HYCC-MONOMER"/>
<dbReference type="BioCyc" id="MetaCyc:HYCC-MONOMER"/>
<dbReference type="PRO" id="PR:P16429"/>
<dbReference type="Proteomes" id="UP000000625">
    <property type="component" value="Chromosome"/>
</dbReference>
<dbReference type="GO" id="GO:0009326">
    <property type="term" value="C:formate dehydrogenase complex"/>
    <property type="evidence" value="ECO:0000353"/>
    <property type="project" value="ComplexPortal"/>
</dbReference>
<dbReference type="GO" id="GO:0005886">
    <property type="term" value="C:plasma membrane"/>
    <property type="evidence" value="ECO:0000314"/>
    <property type="project" value="EcoCyc"/>
</dbReference>
<dbReference type="GO" id="GO:0008137">
    <property type="term" value="F:NADH dehydrogenase (ubiquinone) activity"/>
    <property type="evidence" value="ECO:0007669"/>
    <property type="project" value="InterPro"/>
</dbReference>
<dbReference type="GO" id="GO:0019645">
    <property type="term" value="P:anaerobic electron transport chain"/>
    <property type="evidence" value="ECO:0000314"/>
    <property type="project" value="ComplexPortal"/>
</dbReference>
<dbReference type="GO" id="GO:0009061">
    <property type="term" value="P:anaerobic respiration"/>
    <property type="evidence" value="ECO:0000314"/>
    <property type="project" value="ComplexPortal"/>
</dbReference>
<dbReference type="GO" id="GO:0042773">
    <property type="term" value="P:ATP synthesis coupled electron transport"/>
    <property type="evidence" value="ECO:0007669"/>
    <property type="project" value="InterPro"/>
</dbReference>
<dbReference type="GO" id="GO:0015944">
    <property type="term" value="P:formate oxidation"/>
    <property type="evidence" value="ECO:0000314"/>
    <property type="project" value="ComplexPortal"/>
</dbReference>
<dbReference type="GO" id="GO:0006007">
    <property type="term" value="P:glucose catabolic process"/>
    <property type="evidence" value="ECO:0000314"/>
    <property type="project" value="ComplexPortal"/>
</dbReference>
<dbReference type="InterPro" id="IPR052175">
    <property type="entry name" value="ComplexI-like_HydComp"/>
</dbReference>
<dbReference type="InterPro" id="IPR003918">
    <property type="entry name" value="NADH_UbQ_OxRdtase"/>
</dbReference>
<dbReference type="InterPro" id="IPR001750">
    <property type="entry name" value="ND/Mrp_TM"/>
</dbReference>
<dbReference type="NCBIfam" id="NF005958">
    <property type="entry name" value="PRK08042.1"/>
    <property type="match status" value="1"/>
</dbReference>
<dbReference type="PANTHER" id="PTHR42682:SF3">
    <property type="entry name" value="FORMATE HYDROGENLYASE SUBUNIT 3-RELATED"/>
    <property type="match status" value="1"/>
</dbReference>
<dbReference type="PANTHER" id="PTHR42682">
    <property type="entry name" value="HYDROGENASE-4 COMPONENT F"/>
    <property type="match status" value="1"/>
</dbReference>
<dbReference type="Pfam" id="PF00361">
    <property type="entry name" value="Proton_antipo_M"/>
    <property type="match status" value="1"/>
</dbReference>
<dbReference type="PRINTS" id="PR01437">
    <property type="entry name" value="NUOXDRDTASE4"/>
</dbReference>
<proteinExistence type="evidence at protein level"/>
<organism>
    <name type="scientific">Escherichia coli (strain K12)</name>
    <dbReference type="NCBI Taxonomy" id="83333"/>
    <lineage>
        <taxon>Bacteria</taxon>
        <taxon>Pseudomonadati</taxon>
        <taxon>Pseudomonadota</taxon>
        <taxon>Gammaproteobacteria</taxon>
        <taxon>Enterobacterales</taxon>
        <taxon>Enterobacteriaceae</taxon>
        <taxon>Escherichia</taxon>
    </lineage>
</organism>
<gene>
    <name type="primary">hycC</name>
    <name type="synonym">hevC</name>
    <name type="ordered locus">b2723</name>
    <name type="ordered locus">JW2693</name>
</gene>